<proteinExistence type="inferred from homology"/>
<gene>
    <name evidence="1" type="primary">gcvH</name>
    <name type="ordered locus">ECIAI39_3319</name>
</gene>
<accession>B7NHW5</accession>
<comment type="function">
    <text evidence="1">The glycine cleavage system catalyzes the degradation of glycine. The H protein shuttles the methylamine group of glycine from the P protein to the T protein.</text>
</comment>
<comment type="cofactor">
    <cofactor evidence="1">
        <name>(R)-lipoate</name>
        <dbReference type="ChEBI" id="CHEBI:83088"/>
    </cofactor>
    <text evidence="1">Binds 1 lipoyl cofactor covalently.</text>
</comment>
<comment type="subunit">
    <text evidence="1">The glycine cleavage system is composed of four proteins: P, T, L and H.</text>
</comment>
<comment type="similarity">
    <text evidence="1">Belongs to the GcvH family.</text>
</comment>
<organism>
    <name type="scientific">Escherichia coli O7:K1 (strain IAI39 / ExPEC)</name>
    <dbReference type="NCBI Taxonomy" id="585057"/>
    <lineage>
        <taxon>Bacteria</taxon>
        <taxon>Pseudomonadati</taxon>
        <taxon>Pseudomonadota</taxon>
        <taxon>Gammaproteobacteria</taxon>
        <taxon>Enterobacterales</taxon>
        <taxon>Enterobacteriaceae</taxon>
        <taxon>Escherichia</taxon>
    </lineage>
</organism>
<name>GCSH_ECO7I</name>
<feature type="chain" id="PRO_1000119299" description="Glycine cleavage system H protein">
    <location>
        <begin position="1"/>
        <end position="129"/>
    </location>
</feature>
<feature type="domain" description="Lipoyl-binding" evidence="2">
    <location>
        <begin position="24"/>
        <end position="106"/>
    </location>
</feature>
<feature type="modified residue" description="N6-lipoyllysine" evidence="1">
    <location>
        <position position="65"/>
    </location>
</feature>
<evidence type="ECO:0000255" key="1">
    <source>
        <dbReference type="HAMAP-Rule" id="MF_00272"/>
    </source>
</evidence>
<evidence type="ECO:0000255" key="2">
    <source>
        <dbReference type="PROSITE-ProRule" id="PRU01066"/>
    </source>
</evidence>
<reference key="1">
    <citation type="journal article" date="2009" name="PLoS Genet.">
        <title>Organised genome dynamics in the Escherichia coli species results in highly diverse adaptive paths.</title>
        <authorList>
            <person name="Touchon M."/>
            <person name="Hoede C."/>
            <person name="Tenaillon O."/>
            <person name="Barbe V."/>
            <person name="Baeriswyl S."/>
            <person name="Bidet P."/>
            <person name="Bingen E."/>
            <person name="Bonacorsi S."/>
            <person name="Bouchier C."/>
            <person name="Bouvet O."/>
            <person name="Calteau A."/>
            <person name="Chiapello H."/>
            <person name="Clermont O."/>
            <person name="Cruveiller S."/>
            <person name="Danchin A."/>
            <person name="Diard M."/>
            <person name="Dossat C."/>
            <person name="Karoui M.E."/>
            <person name="Frapy E."/>
            <person name="Garry L."/>
            <person name="Ghigo J.M."/>
            <person name="Gilles A.M."/>
            <person name="Johnson J."/>
            <person name="Le Bouguenec C."/>
            <person name="Lescat M."/>
            <person name="Mangenot S."/>
            <person name="Martinez-Jehanne V."/>
            <person name="Matic I."/>
            <person name="Nassif X."/>
            <person name="Oztas S."/>
            <person name="Petit M.A."/>
            <person name="Pichon C."/>
            <person name="Rouy Z."/>
            <person name="Ruf C.S."/>
            <person name="Schneider D."/>
            <person name="Tourret J."/>
            <person name="Vacherie B."/>
            <person name="Vallenet D."/>
            <person name="Medigue C."/>
            <person name="Rocha E.P.C."/>
            <person name="Denamur E."/>
        </authorList>
    </citation>
    <scope>NUCLEOTIDE SEQUENCE [LARGE SCALE GENOMIC DNA]</scope>
    <source>
        <strain>IAI39 / ExPEC</strain>
    </source>
</reference>
<dbReference type="EMBL" id="CU928164">
    <property type="protein sequence ID" value="CAR19437.1"/>
    <property type="molecule type" value="Genomic_DNA"/>
</dbReference>
<dbReference type="RefSeq" id="WP_001355634.1">
    <property type="nucleotide sequence ID" value="NC_011750.1"/>
</dbReference>
<dbReference type="RefSeq" id="YP_002409241.1">
    <property type="nucleotide sequence ID" value="NC_011750.1"/>
</dbReference>
<dbReference type="SMR" id="B7NHW5"/>
<dbReference type="STRING" id="585057.ECIAI39_3319"/>
<dbReference type="KEGG" id="ect:ECIAI39_3319"/>
<dbReference type="PATRIC" id="fig|585057.6.peg.3443"/>
<dbReference type="HOGENOM" id="CLU_097408_2_1_6"/>
<dbReference type="Proteomes" id="UP000000749">
    <property type="component" value="Chromosome"/>
</dbReference>
<dbReference type="GO" id="GO:0005829">
    <property type="term" value="C:cytosol"/>
    <property type="evidence" value="ECO:0007669"/>
    <property type="project" value="TreeGrafter"/>
</dbReference>
<dbReference type="GO" id="GO:0005960">
    <property type="term" value="C:glycine cleavage complex"/>
    <property type="evidence" value="ECO:0007669"/>
    <property type="project" value="InterPro"/>
</dbReference>
<dbReference type="GO" id="GO:0019464">
    <property type="term" value="P:glycine decarboxylation via glycine cleavage system"/>
    <property type="evidence" value="ECO:0007669"/>
    <property type="project" value="UniProtKB-UniRule"/>
</dbReference>
<dbReference type="CDD" id="cd06848">
    <property type="entry name" value="GCS_H"/>
    <property type="match status" value="1"/>
</dbReference>
<dbReference type="FunFam" id="2.40.50.100:FF:000011">
    <property type="entry name" value="Glycine cleavage system H protein"/>
    <property type="match status" value="1"/>
</dbReference>
<dbReference type="Gene3D" id="2.40.50.100">
    <property type="match status" value="1"/>
</dbReference>
<dbReference type="HAMAP" id="MF_00272">
    <property type="entry name" value="GcvH"/>
    <property type="match status" value="1"/>
</dbReference>
<dbReference type="InterPro" id="IPR003016">
    <property type="entry name" value="2-oxoA_DH_lipoyl-BS"/>
</dbReference>
<dbReference type="InterPro" id="IPR000089">
    <property type="entry name" value="Biotin_lipoyl"/>
</dbReference>
<dbReference type="InterPro" id="IPR002930">
    <property type="entry name" value="GCV_H"/>
</dbReference>
<dbReference type="InterPro" id="IPR033753">
    <property type="entry name" value="GCV_H/Fam206"/>
</dbReference>
<dbReference type="InterPro" id="IPR017453">
    <property type="entry name" value="GCV_H_sub"/>
</dbReference>
<dbReference type="InterPro" id="IPR011053">
    <property type="entry name" value="Single_hybrid_motif"/>
</dbReference>
<dbReference type="NCBIfam" id="TIGR00527">
    <property type="entry name" value="gcvH"/>
    <property type="match status" value="1"/>
</dbReference>
<dbReference type="NCBIfam" id="NF002270">
    <property type="entry name" value="PRK01202.1"/>
    <property type="match status" value="1"/>
</dbReference>
<dbReference type="PANTHER" id="PTHR11715">
    <property type="entry name" value="GLYCINE CLEAVAGE SYSTEM H PROTEIN"/>
    <property type="match status" value="1"/>
</dbReference>
<dbReference type="PANTHER" id="PTHR11715:SF3">
    <property type="entry name" value="GLYCINE CLEAVAGE SYSTEM H PROTEIN-RELATED"/>
    <property type="match status" value="1"/>
</dbReference>
<dbReference type="Pfam" id="PF01597">
    <property type="entry name" value="GCV_H"/>
    <property type="match status" value="1"/>
</dbReference>
<dbReference type="SUPFAM" id="SSF51230">
    <property type="entry name" value="Single hybrid motif"/>
    <property type="match status" value="1"/>
</dbReference>
<dbReference type="PROSITE" id="PS50968">
    <property type="entry name" value="BIOTINYL_LIPOYL"/>
    <property type="match status" value="1"/>
</dbReference>
<dbReference type="PROSITE" id="PS00189">
    <property type="entry name" value="LIPOYL"/>
    <property type="match status" value="1"/>
</dbReference>
<protein>
    <recommendedName>
        <fullName evidence="1">Glycine cleavage system H protein</fullName>
    </recommendedName>
</protein>
<sequence>MSNVPAELKYSKEHEWLRKEADGTYTVGITEHAQELLGDMVFVDLPEVGATVSAGDDCAVAESVKAASDIYAPVSGEIVEVNDALSDSPELVNSEPYAGGWIFKIKASDESELESLLDATAYEALLEDE</sequence>
<keyword id="KW-0450">Lipoyl</keyword>